<dbReference type="EC" id="7.1.1.-" evidence="1"/>
<dbReference type="EMBL" id="CP000115">
    <property type="protein sequence ID" value="ABA05139.1"/>
    <property type="molecule type" value="Genomic_DNA"/>
</dbReference>
<dbReference type="RefSeq" id="WP_011315135.1">
    <property type="nucleotide sequence ID" value="NC_007406.1"/>
</dbReference>
<dbReference type="SMR" id="Q3SRF2"/>
<dbReference type="STRING" id="323098.Nwi_1879"/>
<dbReference type="KEGG" id="nwi:Nwi_1879"/>
<dbReference type="eggNOG" id="COG1143">
    <property type="taxonomic scope" value="Bacteria"/>
</dbReference>
<dbReference type="HOGENOM" id="CLU_067218_5_1_5"/>
<dbReference type="OrthoDB" id="9808559at2"/>
<dbReference type="Proteomes" id="UP000002531">
    <property type="component" value="Chromosome"/>
</dbReference>
<dbReference type="GO" id="GO:0005886">
    <property type="term" value="C:plasma membrane"/>
    <property type="evidence" value="ECO:0007669"/>
    <property type="project" value="UniProtKB-SubCell"/>
</dbReference>
<dbReference type="GO" id="GO:0051539">
    <property type="term" value="F:4 iron, 4 sulfur cluster binding"/>
    <property type="evidence" value="ECO:0007669"/>
    <property type="project" value="UniProtKB-KW"/>
</dbReference>
<dbReference type="GO" id="GO:0005506">
    <property type="term" value="F:iron ion binding"/>
    <property type="evidence" value="ECO:0007669"/>
    <property type="project" value="UniProtKB-UniRule"/>
</dbReference>
<dbReference type="GO" id="GO:0050136">
    <property type="term" value="F:NADH:ubiquinone reductase (non-electrogenic) activity"/>
    <property type="evidence" value="ECO:0007669"/>
    <property type="project" value="UniProtKB-UniRule"/>
</dbReference>
<dbReference type="GO" id="GO:0048038">
    <property type="term" value="F:quinone binding"/>
    <property type="evidence" value="ECO:0007669"/>
    <property type="project" value="UniProtKB-KW"/>
</dbReference>
<dbReference type="GO" id="GO:0009060">
    <property type="term" value="P:aerobic respiration"/>
    <property type="evidence" value="ECO:0007669"/>
    <property type="project" value="TreeGrafter"/>
</dbReference>
<dbReference type="FunFam" id="3.30.70.3270:FF:000001">
    <property type="entry name" value="NADH-quinone oxidoreductase subunit I 1"/>
    <property type="match status" value="1"/>
</dbReference>
<dbReference type="Gene3D" id="3.30.70.3270">
    <property type="match status" value="1"/>
</dbReference>
<dbReference type="HAMAP" id="MF_01351">
    <property type="entry name" value="NDH1_NuoI"/>
    <property type="match status" value="1"/>
</dbReference>
<dbReference type="InterPro" id="IPR017896">
    <property type="entry name" value="4Fe4S_Fe-S-bd"/>
</dbReference>
<dbReference type="InterPro" id="IPR017900">
    <property type="entry name" value="4Fe4S_Fe_S_CS"/>
</dbReference>
<dbReference type="InterPro" id="IPR010226">
    <property type="entry name" value="NADH_quinone_OxRdtase_chainI"/>
</dbReference>
<dbReference type="NCBIfam" id="TIGR01971">
    <property type="entry name" value="NuoI"/>
    <property type="match status" value="1"/>
</dbReference>
<dbReference type="NCBIfam" id="NF004538">
    <property type="entry name" value="PRK05888.1-4"/>
    <property type="match status" value="1"/>
</dbReference>
<dbReference type="NCBIfam" id="NF004539">
    <property type="entry name" value="PRK05888.1-5"/>
    <property type="match status" value="1"/>
</dbReference>
<dbReference type="PANTHER" id="PTHR10849:SF20">
    <property type="entry name" value="NADH DEHYDROGENASE [UBIQUINONE] IRON-SULFUR PROTEIN 8, MITOCHONDRIAL"/>
    <property type="match status" value="1"/>
</dbReference>
<dbReference type="PANTHER" id="PTHR10849">
    <property type="entry name" value="NADH DEHYDROGENASE UBIQUINONE IRON-SULFUR PROTEIN 8, MITOCHONDRIAL"/>
    <property type="match status" value="1"/>
</dbReference>
<dbReference type="Pfam" id="PF12838">
    <property type="entry name" value="Fer4_7"/>
    <property type="match status" value="1"/>
</dbReference>
<dbReference type="SUPFAM" id="SSF54862">
    <property type="entry name" value="4Fe-4S ferredoxins"/>
    <property type="match status" value="1"/>
</dbReference>
<dbReference type="PROSITE" id="PS00198">
    <property type="entry name" value="4FE4S_FER_1"/>
    <property type="match status" value="2"/>
</dbReference>
<dbReference type="PROSITE" id="PS51379">
    <property type="entry name" value="4FE4S_FER_2"/>
    <property type="match status" value="2"/>
</dbReference>
<comment type="function">
    <text evidence="1">NDH-1 shuttles electrons from NADH, via FMN and iron-sulfur (Fe-S) centers, to quinones in the respiratory chain. The immediate electron acceptor for the enzyme in this species is believed to be ubiquinone. Couples the redox reaction to proton translocation (for every two electrons transferred, four hydrogen ions are translocated across the cytoplasmic membrane), and thus conserves the redox energy in a proton gradient.</text>
</comment>
<comment type="catalytic activity">
    <reaction evidence="1">
        <text>a quinone + NADH + 5 H(+)(in) = a quinol + NAD(+) + 4 H(+)(out)</text>
        <dbReference type="Rhea" id="RHEA:57888"/>
        <dbReference type="ChEBI" id="CHEBI:15378"/>
        <dbReference type="ChEBI" id="CHEBI:24646"/>
        <dbReference type="ChEBI" id="CHEBI:57540"/>
        <dbReference type="ChEBI" id="CHEBI:57945"/>
        <dbReference type="ChEBI" id="CHEBI:132124"/>
    </reaction>
</comment>
<comment type="cofactor">
    <cofactor evidence="1">
        <name>[4Fe-4S] cluster</name>
        <dbReference type="ChEBI" id="CHEBI:49883"/>
    </cofactor>
    <text evidence="1">Binds 2 [4Fe-4S] clusters per subunit.</text>
</comment>
<comment type="subunit">
    <text evidence="1">NDH-1 is composed of 14 different subunits. Subunits NuoA, H, J, K, L, M, N constitute the membrane sector of the complex.</text>
</comment>
<comment type="subcellular location">
    <subcellularLocation>
        <location evidence="1">Cell inner membrane</location>
        <topology evidence="1">Peripheral membrane protein</topology>
    </subcellularLocation>
</comment>
<comment type="similarity">
    <text evidence="1">Belongs to the complex I 23 kDa subunit family.</text>
</comment>
<protein>
    <recommendedName>
        <fullName evidence="1">NADH-quinone oxidoreductase subunit I</fullName>
        <ecNumber evidence="1">7.1.1.-</ecNumber>
    </recommendedName>
    <alternativeName>
        <fullName evidence="1">NADH dehydrogenase I subunit I</fullName>
    </alternativeName>
    <alternativeName>
        <fullName evidence="1">NDH-1 subunit I</fullName>
    </alternativeName>
</protein>
<feature type="chain" id="PRO_0000250919" description="NADH-quinone oxidoreductase subunit I">
    <location>
        <begin position="1"/>
        <end position="162"/>
    </location>
</feature>
<feature type="domain" description="4Fe-4S ferredoxin-type 1" evidence="1">
    <location>
        <begin position="52"/>
        <end position="82"/>
    </location>
</feature>
<feature type="domain" description="4Fe-4S ferredoxin-type 2" evidence="1">
    <location>
        <begin position="93"/>
        <end position="122"/>
    </location>
</feature>
<feature type="binding site" evidence="1">
    <location>
        <position position="62"/>
    </location>
    <ligand>
        <name>[4Fe-4S] cluster</name>
        <dbReference type="ChEBI" id="CHEBI:49883"/>
        <label>1</label>
    </ligand>
</feature>
<feature type="binding site" evidence="1">
    <location>
        <position position="65"/>
    </location>
    <ligand>
        <name>[4Fe-4S] cluster</name>
        <dbReference type="ChEBI" id="CHEBI:49883"/>
        <label>1</label>
    </ligand>
</feature>
<feature type="binding site" evidence="1">
    <location>
        <position position="68"/>
    </location>
    <ligand>
        <name>[4Fe-4S] cluster</name>
        <dbReference type="ChEBI" id="CHEBI:49883"/>
        <label>1</label>
    </ligand>
</feature>
<feature type="binding site" evidence="1">
    <location>
        <position position="72"/>
    </location>
    <ligand>
        <name>[4Fe-4S] cluster</name>
        <dbReference type="ChEBI" id="CHEBI:49883"/>
        <label>2</label>
    </ligand>
</feature>
<feature type="binding site" evidence="1">
    <location>
        <position position="102"/>
    </location>
    <ligand>
        <name>[4Fe-4S] cluster</name>
        <dbReference type="ChEBI" id="CHEBI:49883"/>
        <label>2</label>
    </ligand>
</feature>
<feature type="binding site" evidence="1">
    <location>
        <position position="105"/>
    </location>
    <ligand>
        <name>[4Fe-4S] cluster</name>
        <dbReference type="ChEBI" id="CHEBI:49883"/>
        <label>2</label>
    </ligand>
</feature>
<feature type="binding site" evidence="1">
    <location>
        <position position="108"/>
    </location>
    <ligand>
        <name>[4Fe-4S] cluster</name>
        <dbReference type="ChEBI" id="CHEBI:49883"/>
        <label>2</label>
    </ligand>
</feature>
<feature type="binding site" evidence="1">
    <location>
        <position position="112"/>
    </location>
    <ligand>
        <name>[4Fe-4S] cluster</name>
        <dbReference type="ChEBI" id="CHEBI:49883"/>
        <label>1</label>
    </ligand>
</feature>
<sequence length="162" mass="18673">MSINATARSLLLTEFISAFFLTMRYFFKPKPTINYPFEKNPISPRFRGEHALRRYPNGEERCIACKLCEAVCPAQAITIEAGPRRNDGTRRTVRYDIDMVKCIYCGLCQEACPVDAIVEGPNFEFATETREELYYDKAKLLANGDRWEREIAKAIELDAPYR</sequence>
<evidence type="ECO:0000255" key="1">
    <source>
        <dbReference type="HAMAP-Rule" id="MF_01351"/>
    </source>
</evidence>
<reference key="1">
    <citation type="journal article" date="2006" name="Appl. Environ. Microbiol.">
        <title>Genome sequence of the chemolithoautotrophic nitrite-oxidizing bacterium Nitrobacter winogradskyi Nb-255.</title>
        <authorList>
            <person name="Starkenburg S.R."/>
            <person name="Chain P.S.G."/>
            <person name="Sayavedra-Soto L.A."/>
            <person name="Hauser L."/>
            <person name="Land M.L."/>
            <person name="Larimer F.W."/>
            <person name="Malfatti S.A."/>
            <person name="Klotz M.G."/>
            <person name="Bottomley P.J."/>
            <person name="Arp D.J."/>
            <person name="Hickey W.J."/>
        </authorList>
    </citation>
    <scope>NUCLEOTIDE SEQUENCE [LARGE SCALE GENOMIC DNA]</scope>
    <source>
        <strain>ATCC 25391 / DSM 10237 / CIP 104748 / NCIMB 11846 / Nb-255</strain>
    </source>
</reference>
<name>NUOI_NITWN</name>
<accession>Q3SRF2</accession>
<keyword id="KW-0004">4Fe-4S</keyword>
<keyword id="KW-0997">Cell inner membrane</keyword>
<keyword id="KW-1003">Cell membrane</keyword>
<keyword id="KW-0408">Iron</keyword>
<keyword id="KW-0411">Iron-sulfur</keyword>
<keyword id="KW-0472">Membrane</keyword>
<keyword id="KW-0479">Metal-binding</keyword>
<keyword id="KW-0520">NAD</keyword>
<keyword id="KW-0874">Quinone</keyword>
<keyword id="KW-1185">Reference proteome</keyword>
<keyword id="KW-0677">Repeat</keyword>
<keyword id="KW-1278">Translocase</keyword>
<keyword id="KW-0830">Ubiquinone</keyword>
<proteinExistence type="inferred from homology"/>
<gene>
    <name evidence="1" type="primary">nuoI</name>
    <name type="ordered locus">Nwi_1879</name>
</gene>
<organism>
    <name type="scientific">Nitrobacter winogradskyi (strain ATCC 25391 / DSM 10237 / CIP 104748 / NCIMB 11846 / Nb-255)</name>
    <dbReference type="NCBI Taxonomy" id="323098"/>
    <lineage>
        <taxon>Bacteria</taxon>
        <taxon>Pseudomonadati</taxon>
        <taxon>Pseudomonadota</taxon>
        <taxon>Alphaproteobacteria</taxon>
        <taxon>Hyphomicrobiales</taxon>
        <taxon>Nitrobacteraceae</taxon>
        <taxon>Nitrobacter</taxon>
    </lineage>
</organism>